<protein>
    <recommendedName>
        <fullName>Bifunctional heparan sulfate N-deacetylase/N-sulfotransferase 3</fullName>
        <ecNumber>2.8.2.8</ecNumber>
    </recommendedName>
    <alternativeName>
        <fullName>Glucosaminyl N-deacetylase/N-sulfotransferase 3</fullName>
        <shortName>NDST-3</shortName>
    </alternativeName>
    <alternativeName>
        <fullName>N-heparan sulfate sulfotransferase 3</fullName>
        <shortName>N-HSST 3</shortName>
    </alternativeName>
    <domain>
        <recommendedName>
            <fullName>Heparan sulfate N-deacetylase 3</fullName>
            <ecNumber>3.-.-.-</ecNumber>
        </recommendedName>
    </domain>
    <domain>
        <recommendedName>
            <fullName>Heparan sulfate N-sulfotransferase 3</fullName>
            <ecNumber>2.8.2.-</ecNumber>
        </recommendedName>
    </domain>
</protein>
<proteinExistence type="evidence at transcript level"/>
<gene>
    <name type="primary">Ndst3</name>
    <name type="synonym">Hsst3</name>
</gene>
<sequence length="873" mass="101040">MSFIMKPHRHFQRTLILLATFCMVSIIISAYYLYSGYKQESEVSGRASEVDCGDLQHIPSRLMEVRRTMISDASRTDPTVLVFVESQYSSLGQDIIMMLESIRFHYHTEIAPGKGDLPALTDNVKGKYVLIIYENILKYINMDSWNRSLLDKYCIEYGVGIIGFHKTSEKNLQSFQFRGFPFSISGNLAVKDCCINPHSPLLRVTKSSKLDRGSLPGTDWTVFQINHSTYQPVIFAKVKTPENLSPPISKHAFYATIIHDLGLHDGIQRVLFGNNLNFWLHKLIFIDAISFLSGKRLTLSLDRYILVDIDDIFVGKEGTRMNTNDVKALLDTQNLLRTQITNFTFNLGFSGKFYHTGTEEEDEGDDCLLGSVDEFWWFPHMWSHMQPHLFHNESSLIEQMILNKKFALEHGIPTDMGYAVSPHHSGVYPVHVQLYEAWKKVWNIKITSTEEYPHLKPARYRRGFIHKNIMVLPRQTCGLFTHTIFYKEYPGGPRELDKSIHGGELFFTVVLNPISIFMTHLSNYGNDRLGLYTFVNLANFVQTWTNLRLQTLPPAQLAHKYFELFPDQKDPLWQNPCDDKRHRDIWSKEKTCDRLPKFLVIGPQKTGTTALCLFLIMHPSILSNSPSPKSFEEVQFFNRNNYHRGIDWYMDFFPVPSNVTTDFLFEKSANYFHSEDAPKRAASLVPKAKIITILIDPSDRAYSWYQHQRSHEDPAALKFSFYEVISAGPNAPWELRTLQKRCLVPGWYANHIERWLVYFPPFQLLIIDGQHLRTTPATVMDEVQKFLGVSPHYNYSEALTFDSHKGFWCQLLEEGKTKCLGKSKGRKYPPMDSDSRAFLSSYYRDHNVELSKLLHRLGQPLPSWLRQELQKVR</sequence>
<reference key="1">
    <citation type="journal article" date="2001" name="J. Biol. Chem.">
        <title>Multiple isozymes of heparan sulfate/heparin GlcNAc N-deacetylase/GlcN N-sulfotransferase. Structure and activity of the fourth member, NDST4.</title>
        <authorList>
            <person name="Aikawa J."/>
            <person name="Grobe K."/>
            <person name="Tsujimoto M."/>
            <person name="Esko J.D."/>
        </authorList>
    </citation>
    <scope>NUCLEOTIDE SEQUENCE [MRNA] (ISOFORM 1)</scope>
    <scope>FUNCTION</scope>
    <scope>TISSUE SPECIFICITY</scope>
    <source>
        <strain>BALB/cJ</strain>
        <tissue>Brain</tissue>
    </source>
</reference>
<reference key="2">
    <citation type="journal article" date="2005" name="Science">
        <title>The transcriptional landscape of the mammalian genome.</title>
        <authorList>
            <person name="Carninci P."/>
            <person name="Kasukawa T."/>
            <person name="Katayama S."/>
            <person name="Gough J."/>
            <person name="Frith M.C."/>
            <person name="Maeda N."/>
            <person name="Oyama R."/>
            <person name="Ravasi T."/>
            <person name="Lenhard B."/>
            <person name="Wells C."/>
            <person name="Kodzius R."/>
            <person name="Shimokawa K."/>
            <person name="Bajic V.B."/>
            <person name="Brenner S.E."/>
            <person name="Batalov S."/>
            <person name="Forrest A.R."/>
            <person name="Zavolan M."/>
            <person name="Davis M.J."/>
            <person name="Wilming L.G."/>
            <person name="Aidinis V."/>
            <person name="Allen J.E."/>
            <person name="Ambesi-Impiombato A."/>
            <person name="Apweiler R."/>
            <person name="Aturaliya R.N."/>
            <person name="Bailey T.L."/>
            <person name="Bansal M."/>
            <person name="Baxter L."/>
            <person name="Beisel K.W."/>
            <person name="Bersano T."/>
            <person name="Bono H."/>
            <person name="Chalk A.M."/>
            <person name="Chiu K.P."/>
            <person name="Choudhary V."/>
            <person name="Christoffels A."/>
            <person name="Clutterbuck D.R."/>
            <person name="Crowe M.L."/>
            <person name="Dalla E."/>
            <person name="Dalrymple B.P."/>
            <person name="de Bono B."/>
            <person name="Della Gatta G."/>
            <person name="di Bernardo D."/>
            <person name="Down T."/>
            <person name="Engstrom P."/>
            <person name="Fagiolini M."/>
            <person name="Faulkner G."/>
            <person name="Fletcher C.F."/>
            <person name="Fukushima T."/>
            <person name="Furuno M."/>
            <person name="Futaki S."/>
            <person name="Gariboldi M."/>
            <person name="Georgii-Hemming P."/>
            <person name="Gingeras T.R."/>
            <person name="Gojobori T."/>
            <person name="Green R.E."/>
            <person name="Gustincich S."/>
            <person name="Harbers M."/>
            <person name="Hayashi Y."/>
            <person name="Hensch T.K."/>
            <person name="Hirokawa N."/>
            <person name="Hill D."/>
            <person name="Huminiecki L."/>
            <person name="Iacono M."/>
            <person name="Ikeo K."/>
            <person name="Iwama A."/>
            <person name="Ishikawa T."/>
            <person name="Jakt M."/>
            <person name="Kanapin A."/>
            <person name="Katoh M."/>
            <person name="Kawasawa Y."/>
            <person name="Kelso J."/>
            <person name="Kitamura H."/>
            <person name="Kitano H."/>
            <person name="Kollias G."/>
            <person name="Krishnan S.P."/>
            <person name="Kruger A."/>
            <person name="Kummerfeld S.K."/>
            <person name="Kurochkin I.V."/>
            <person name="Lareau L.F."/>
            <person name="Lazarevic D."/>
            <person name="Lipovich L."/>
            <person name="Liu J."/>
            <person name="Liuni S."/>
            <person name="McWilliam S."/>
            <person name="Madan Babu M."/>
            <person name="Madera M."/>
            <person name="Marchionni L."/>
            <person name="Matsuda H."/>
            <person name="Matsuzawa S."/>
            <person name="Miki H."/>
            <person name="Mignone F."/>
            <person name="Miyake S."/>
            <person name="Morris K."/>
            <person name="Mottagui-Tabar S."/>
            <person name="Mulder N."/>
            <person name="Nakano N."/>
            <person name="Nakauchi H."/>
            <person name="Ng P."/>
            <person name="Nilsson R."/>
            <person name="Nishiguchi S."/>
            <person name="Nishikawa S."/>
            <person name="Nori F."/>
            <person name="Ohara O."/>
            <person name="Okazaki Y."/>
            <person name="Orlando V."/>
            <person name="Pang K.C."/>
            <person name="Pavan W.J."/>
            <person name="Pavesi G."/>
            <person name="Pesole G."/>
            <person name="Petrovsky N."/>
            <person name="Piazza S."/>
            <person name="Reed J."/>
            <person name="Reid J.F."/>
            <person name="Ring B.Z."/>
            <person name="Ringwald M."/>
            <person name="Rost B."/>
            <person name="Ruan Y."/>
            <person name="Salzberg S.L."/>
            <person name="Sandelin A."/>
            <person name="Schneider C."/>
            <person name="Schoenbach C."/>
            <person name="Sekiguchi K."/>
            <person name="Semple C.A."/>
            <person name="Seno S."/>
            <person name="Sessa L."/>
            <person name="Sheng Y."/>
            <person name="Shibata Y."/>
            <person name="Shimada H."/>
            <person name="Shimada K."/>
            <person name="Silva D."/>
            <person name="Sinclair B."/>
            <person name="Sperling S."/>
            <person name="Stupka E."/>
            <person name="Sugiura K."/>
            <person name="Sultana R."/>
            <person name="Takenaka Y."/>
            <person name="Taki K."/>
            <person name="Tammoja K."/>
            <person name="Tan S.L."/>
            <person name="Tang S."/>
            <person name="Taylor M.S."/>
            <person name="Tegner J."/>
            <person name="Teichmann S.A."/>
            <person name="Ueda H.R."/>
            <person name="van Nimwegen E."/>
            <person name="Verardo R."/>
            <person name="Wei C.L."/>
            <person name="Yagi K."/>
            <person name="Yamanishi H."/>
            <person name="Zabarovsky E."/>
            <person name="Zhu S."/>
            <person name="Zimmer A."/>
            <person name="Hide W."/>
            <person name="Bult C."/>
            <person name="Grimmond S.M."/>
            <person name="Teasdale R.D."/>
            <person name="Liu E.T."/>
            <person name="Brusic V."/>
            <person name="Quackenbush J."/>
            <person name="Wahlestedt C."/>
            <person name="Mattick J.S."/>
            <person name="Hume D.A."/>
            <person name="Kai C."/>
            <person name="Sasaki D."/>
            <person name="Tomaru Y."/>
            <person name="Fukuda S."/>
            <person name="Kanamori-Katayama M."/>
            <person name="Suzuki M."/>
            <person name="Aoki J."/>
            <person name="Arakawa T."/>
            <person name="Iida J."/>
            <person name="Imamura K."/>
            <person name="Itoh M."/>
            <person name="Kato T."/>
            <person name="Kawaji H."/>
            <person name="Kawagashira N."/>
            <person name="Kawashima T."/>
            <person name="Kojima M."/>
            <person name="Kondo S."/>
            <person name="Konno H."/>
            <person name="Nakano K."/>
            <person name="Ninomiya N."/>
            <person name="Nishio T."/>
            <person name="Okada M."/>
            <person name="Plessy C."/>
            <person name="Shibata K."/>
            <person name="Shiraki T."/>
            <person name="Suzuki S."/>
            <person name="Tagami M."/>
            <person name="Waki K."/>
            <person name="Watahiki A."/>
            <person name="Okamura-Oho Y."/>
            <person name="Suzuki H."/>
            <person name="Kawai J."/>
            <person name="Hayashizaki Y."/>
        </authorList>
    </citation>
    <scope>NUCLEOTIDE SEQUENCE [LARGE SCALE MRNA] (ISOFORMS 2 AND 3)</scope>
    <source>
        <strain>C57BL/6J</strain>
        <tissue>Spinal ganglion</tissue>
        <tissue>Testis</tissue>
    </source>
</reference>
<reference key="3">
    <citation type="journal article" date="2004" name="Genome Res.">
        <title>The status, quality, and expansion of the NIH full-length cDNA project: the Mammalian Gene Collection (MGC).</title>
        <authorList>
            <consortium name="The MGC Project Team"/>
        </authorList>
    </citation>
    <scope>NUCLEOTIDE SEQUENCE [LARGE SCALE MRNA] (ISOFORM 2)</scope>
    <source>
        <strain>C57BL/6J</strain>
        <tissue>Brain</tissue>
    </source>
</reference>
<reference key="4">
    <citation type="journal article" date="2005" name="Nat. Immunol.">
        <title>Endothelial heparan sulfate deficiency impairs L-selectin- and chemokine-mediated neutrophil trafficking during inflammatory responses.</title>
        <authorList>
            <person name="Wang L."/>
            <person name="Fuster M."/>
            <person name="Sriramarao P."/>
            <person name="Esko J.D."/>
        </authorList>
    </citation>
    <scope>TISSUE SPECIFICITY</scope>
</reference>
<accession>Q9EQH7</accession>
<accession>Q6AXE0</accession>
<accession>Q9D557</accession>
<name>NDST3_MOUSE</name>
<evidence type="ECO:0000250" key="1"/>
<evidence type="ECO:0000255" key="2"/>
<evidence type="ECO:0000269" key="3">
    <source>
    </source>
</evidence>
<evidence type="ECO:0000269" key="4">
    <source>
    </source>
</evidence>
<evidence type="ECO:0000303" key="5">
    <source>
    </source>
</evidence>
<evidence type="ECO:0000303" key="6">
    <source>
    </source>
</evidence>
<evidence type="ECO:0000305" key="7"/>
<keyword id="KW-0025">Alternative splicing</keyword>
<keyword id="KW-1015">Disulfide bond</keyword>
<keyword id="KW-0325">Glycoprotein</keyword>
<keyword id="KW-0333">Golgi apparatus</keyword>
<keyword id="KW-0378">Hydrolase</keyword>
<keyword id="KW-0472">Membrane</keyword>
<keyword id="KW-0511">Multifunctional enzyme</keyword>
<keyword id="KW-1185">Reference proteome</keyword>
<keyword id="KW-0735">Signal-anchor</keyword>
<keyword id="KW-0808">Transferase</keyword>
<keyword id="KW-0812">Transmembrane</keyword>
<keyword id="KW-1133">Transmembrane helix</keyword>
<comment type="function">
    <text evidence="3">Essential bifunctional enzyme that catalyzes both the N-deacetylation and the N-sulfation of glucosamine (GlcNAc) of the glycosaminoglycan in heparan sulfate. Modifies the GlcNAc-GlcA disaccharide repeating sugar backbone to make N-sulfated heparosan, a prerequisite substrate for later modifications in heparin biosynthesis. Has high deacetylase activity but low sulfotransferase activity.</text>
</comment>
<comment type="catalytic activity">
    <reaction>
        <text>alpha-D-glucosaminyl-[heparan sulfate](n) + 3'-phosphoadenylyl sulfate = N-sulfo-alpha-D-glucosaminyl-[heparan sulfate](n) + adenosine 3',5'-bisphosphate + 2 H(+)</text>
        <dbReference type="Rhea" id="RHEA:21980"/>
        <dbReference type="Rhea" id="RHEA-COMP:9830"/>
        <dbReference type="Rhea" id="RHEA-COMP:14602"/>
        <dbReference type="ChEBI" id="CHEBI:15378"/>
        <dbReference type="ChEBI" id="CHEBI:58339"/>
        <dbReference type="ChEBI" id="CHEBI:58343"/>
        <dbReference type="ChEBI" id="CHEBI:58388"/>
        <dbReference type="ChEBI" id="CHEBI:140572"/>
        <dbReference type="EC" id="2.8.2.8"/>
    </reaction>
</comment>
<comment type="pathway">
    <text>Glycan metabolism; heparan sulfate biosynthesis.</text>
</comment>
<comment type="pathway">
    <text>Glycan metabolism; heparin biosynthesis.</text>
</comment>
<comment type="subunit">
    <text evidence="1">Monomer.</text>
</comment>
<comment type="subcellular location">
    <subcellularLocation>
        <location evidence="1">Golgi apparatus membrane</location>
        <topology evidence="1">Single-pass type II membrane protein</topology>
    </subcellularLocation>
</comment>
<comment type="alternative products">
    <event type="alternative splicing"/>
    <isoform>
        <id>Q9EQH7-1</id>
        <name>1</name>
        <sequence type="displayed"/>
    </isoform>
    <isoform>
        <id>Q9EQH7-2</id>
        <name>2</name>
        <sequence type="described" ref="VSP_017408 VSP_017409"/>
    </isoform>
    <isoform>
        <id>Q9EQH7-3</id>
        <name>3</name>
        <sequence type="described" ref="VSP_017407"/>
    </isoform>
</comment>
<comment type="tissue specificity">
    <text evidence="3 4">Strongly expressed strongly in brain. Expressed at high level at embryonic day 11 compared to other stages of development. Weakly expressed in adult heart, kidney, muscle, endothelial cells and testis but not in other tissues.</text>
</comment>
<comment type="miscellaneous">
    <text>The presence of 4 different heparan sulfate N-deacetylase/N-sulfotransferase enzymes in mammals, as well as differences in their enzyme activity suggest that some initiate heparan sulfate modification/sulfation reactions, whereas other later on fill in or extend already modified heparan sulfate sequences.</text>
</comment>
<comment type="similarity">
    <text evidence="7">Belongs to the sulfotransferase 1 family. NDST subfamily.</text>
</comment>
<dbReference type="EC" id="2.8.2.8"/>
<dbReference type="EC" id="3.-.-.-"/>
<dbReference type="EC" id="2.8.2.-"/>
<dbReference type="EMBL" id="AF221095">
    <property type="protein sequence ID" value="AAG34793.1"/>
    <property type="molecule type" value="mRNA"/>
</dbReference>
<dbReference type="EMBL" id="AK015768">
    <property type="protein sequence ID" value="BAB29967.1"/>
    <property type="molecule type" value="mRNA"/>
</dbReference>
<dbReference type="EMBL" id="AK141945">
    <property type="protein sequence ID" value="BAE24894.1"/>
    <property type="molecule type" value="mRNA"/>
</dbReference>
<dbReference type="EMBL" id="BC079622">
    <property type="protein sequence ID" value="AAH79622.1"/>
    <property type="molecule type" value="mRNA"/>
</dbReference>
<dbReference type="CCDS" id="CCDS17818.1">
    <molecule id="Q9EQH7-1"/>
</dbReference>
<dbReference type="CCDS" id="CCDS80013.1">
    <molecule id="Q9EQH7-3"/>
</dbReference>
<dbReference type="RefSeq" id="NP_001280611.1">
    <property type="nucleotide sequence ID" value="NM_001293682.1"/>
</dbReference>
<dbReference type="RefSeq" id="NP_112463.2">
    <property type="nucleotide sequence ID" value="NM_031186.3"/>
</dbReference>
<dbReference type="SMR" id="Q9EQH7"/>
<dbReference type="BioGRID" id="219915">
    <property type="interactions" value="1"/>
</dbReference>
<dbReference type="FunCoup" id="Q9EQH7">
    <property type="interactions" value="883"/>
</dbReference>
<dbReference type="STRING" id="10090.ENSMUSP00000118207"/>
<dbReference type="GlyCosmos" id="Q9EQH7">
    <property type="glycosylation" value="6 sites, No reported glycans"/>
</dbReference>
<dbReference type="GlyGen" id="Q9EQH7">
    <property type="glycosylation" value="6 sites, 2 N-linked glycans (2 sites)"/>
</dbReference>
<dbReference type="iPTMnet" id="Q9EQH7"/>
<dbReference type="PhosphoSitePlus" id="Q9EQH7"/>
<dbReference type="PaxDb" id="10090-ENSMUSP00000118207"/>
<dbReference type="ProteomicsDB" id="253042">
    <molecule id="Q9EQH7-1"/>
</dbReference>
<dbReference type="ProteomicsDB" id="253043">
    <molecule id="Q9EQH7-2"/>
</dbReference>
<dbReference type="ProteomicsDB" id="253044">
    <molecule id="Q9EQH7-3"/>
</dbReference>
<dbReference type="Antibodypedia" id="26593">
    <property type="antibodies" value="126 antibodies from 17 providers"/>
</dbReference>
<dbReference type="DNASU" id="83398"/>
<dbReference type="Ensembl" id="ENSMUST00000137404.8">
    <molecule id="Q9EQH7-2"/>
    <property type="protein sequence ID" value="ENSMUSP00000118796.2"/>
    <property type="gene ID" value="ENSMUSG00000027977.16"/>
</dbReference>
<dbReference type="GeneID" id="83398"/>
<dbReference type="KEGG" id="mmu:83398"/>
<dbReference type="AGR" id="MGI:1932544"/>
<dbReference type="CTD" id="9348"/>
<dbReference type="MGI" id="MGI:1932544">
    <property type="gene designation" value="Ndst3"/>
</dbReference>
<dbReference type="VEuPathDB" id="HostDB:ENSMUSG00000027977"/>
<dbReference type="eggNOG" id="KOG3703">
    <property type="taxonomic scope" value="Eukaryota"/>
</dbReference>
<dbReference type="GeneTree" id="ENSGT00940000160665"/>
<dbReference type="HOGENOM" id="CLU_011357_1_0_1"/>
<dbReference type="InParanoid" id="Q9EQH7"/>
<dbReference type="OrthoDB" id="8958249at2759"/>
<dbReference type="PhylomeDB" id="Q9EQH7"/>
<dbReference type="BRENDA" id="2.8.2.8">
    <property type="organism ID" value="3474"/>
</dbReference>
<dbReference type="Reactome" id="R-MMU-2022928">
    <property type="pathway name" value="HS-GAG biosynthesis"/>
</dbReference>
<dbReference type="UniPathway" id="UPA00756"/>
<dbReference type="UniPathway" id="UPA00862"/>
<dbReference type="BioGRID-ORCS" id="83398">
    <property type="hits" value="2 hits in 76 CRISPR screens"/>
</dbReference>
<dbReference type="ChiTaRS" id="Ndst3">
    <property type="organism name" value="mouse"/>
</dbReference>
<dbReference type="PRO" id="PR:Q9EQH7"/>
<dbReference type="Proteomes" id="UP000000589">
    <property type="component" value="Chromosome 3"/>
</dbReference>
<dbReference type="RNAct" id="Q9EQH7">
    <property type="molecule type" value="protein"/>
</dbReference>
<dbReference type="Bgee" id="ENSMUSG00000027977">
    <property type="expression patterns" value="Expressed in cerebellar cortex and 61 other cell types or tissues"/>
</dbReference>
<dbReference type="ExpressionAtlas" id="Q9EQH7">
    <property type="expression patterns" value="baseline and differential"/>
</dbReference>
<dbReference type="GO" id="GO:0000139">
    <property type="term" value="C:Golgi membrane"/>
    <property type="evidence" value="ECO:0007669"/>
    <property type="project" value="UniProtKB-SubCell"/>
</dbReference>
<dbReference type="GO" id="GO:0019213">
    <property type="term" value="F:deacetylase activity"/>
    <property type="evidence" value="ECO:0000314"/>
    <property type="project" value="MGI"/>
</dbReference>
<dbReference type="GO" id="GO:0015016">
    <property type="term" value="F:heparan sulfate N-sulfotransferase activity"/>
    <property type="evidence" value="ECO:0000314"/>
    <property type="project" value="MGI"/>
</dbReference>
<dbReference type="GO" id="GO:0050119">
    <property type="term" value="F:N-acetylglucosamine deacetylase activity"/>
    <property type="evidence" value="ECO:0000314"/>
    <property type="project" value="MGI"/>
</dbReference>
<dbReference type="GO" id="GO:0008146">
    <property type="term" value="F:sulfotransferase activity"/>
    <property type="evidence" value="ECO:0000314"/>
    <property type="project" value="MGI"/>
</dbReference>
<dbReference type="GO" id="GO:0015012">
    <property type="term" value="P:heparan sulfate proteoglycan biosynthetic process"/>
    <property type="evidence" value="ECO:0000315"/>
    <property type="project" value="MGI"/>
</dbReference>
<dbReference type="GO" id="GO:0030210">
    <property type="term" value="P:heparin proteoglycan biosynthetic process"/>
    <property type="evidence" value="ECO:0007669"/>
    <property type="project" value="UniProtKB-UniPathway"/>
</dbReference>
<dbReference type="FunFam" id="3.40.50.300:FF:000176">
    <property type="entry name" value="bifunctional heparan sulfate N-deacetylase/N-sulfotransferase 1"/>
    <property type="match status" value="1"/>
</dbReference>
<dbReference type="Gene3D" id="3.40.50.300">
    <property type="entry name" value="P-loop containing nucleotide triphosphate hydrolases"/>
    <property type="match status" value="1"/>
</dbReference>
<dbReference type="InterPro" id="IPR021930">
    <property type="entry name" value="Heparan_SO4_deacetylase_dom"/>
</dbReference>
<dbReference type="InterPro" id="IPR056793">
    <property type="entry name" value="HSNSD_N"/>
</dbReference>
<dbReference type="InterPro" id="IPR037359">
    <property type="entry name" value="NST/OST"/>
</dbReference>
<dbReference type="InterPro" id="IPR027417">
    <property type="entry name" value="P-loop_NTPase"/>
</dbReference>
<dbReference type="InterPro" id="IPR000863">
    <property type="entry name" value="Sulfotransferase_dom"/>
</dbReference>
<dbReference type="PANTHER" id="PTHR10605:SF29">
    <property type="entry name" value="BIFUNCTIONAL HEPARAN SULFATE N-DEACETYLASE_N-SULFOTRANSFERASE 3"/>
    <property type="match status" value="1"/>
</dbReference>
<dbReference type="PANTHER" id="PTHR10605">
    <property type="entry name" value="HEPARAN SULFATE SULFOTRANSFERASE"/>
    <property type="match status" value="1"/>
</dbReference>
<dbReference type="Pfam" id="PF12062">
    <property type="entry name" value="HSNSD-CE"/>
    <property type="match status" value="1"/>
</dbReference>
<dbReference type="Pfam" id="PF25119">
    <property type="entry name" value="HSNSD_N"/>
    <property type="match status" value="1"/>
</dbReference>
<dbReference type="Pfam" id="PF00685">
    <property type="entry name" value="Sulfotransfer_1"/>
    <property type="match status" value="1"/>
</dbReference>
<dbReference type="SUPFAM" id="SSF52540">
    <property type="entry name" value="P-loop containing nucleoside triphosphate hydrolases"/>
    <property type="match status" value="1"/>
</dbReference>
<organism>
    <name type="scientific">Mus musculus</name>
    <name type="common">Mouse</name>
    <dbReference type="NCBI Taxonomy" id="10090"/>
    <lineage>
        <taxon>Eukaryota</taxon>
        <taxon>Metazoa</taxon>
        <taxon>Chordata</taxon>
        <taxon>Craniata</taxon>
        <taxon>Vertebrata</taxon>
        <taxon>Euteleostomi</taxon>
        <taxon>Mammalia</taxon>
        <taxon>Eutheria</taxon>
        <taxon>Euarchontoglires</taxon>
        <taxon>Glires</taxon>
        <taxon>Rodentia</taxon>
        <taxon>Myomorpha</taxon>
        <taxon>Muroidea</taxon>
        <taxon>Muridae</taxon>
        <taxon>Murinae</taxon>
        <taxon>Mus</taxon>
        <taxon>Mus</taxon>
    </lineage>
</organism>
<feature type="chain" id="PRO_0000225660" description="Bifunctional heparan sulfate N-deacetylase/N-sulfotransferase 3">
    <location>
        <begin position="1"/>
        <end position="873"/>
    </location>
</feature>
<feature type="topological domain" description="Cytoplasmic" evidence="2">
    <location>
        <begin position="1"/>
        <end position="13"/>
    </location>
</feature>
<feature type="transmembrane region" description="Helical; Signal-anchor for type II membrane protein" evidence="2">
    <location>
        <begin position="14"/>
        <end position="34"/>
    </location>
</feature>
<feature type="topological domain" description="Lumenal" evidence="2">
    <location>
        <begin position="35"/>
        <end position="873"/>
    </location>
</feature>
<feature type="region of interest" description="Heparan sulfate N-deacetylase 3">
    <location>
        <begin position="36"/>
        <end position="589"/>
    </location>
</feature>
<feature type="region of interest" description="Heparan sulfate N-sulfotransferase 3">
    <location>
        <begin position="590"/>
        <end position="873"/>
    </location>
</feature>
<feature type="active site" description="For sulfotransferase activity" evidence="1">
    <location>
        <position position="605"/>
    </location>
</feature>
<feature type="binding site" evidence="1">
    <location>
        <begin position="605"/>
        <end position="609"/>
    </location>
    <ligand>
        <name>3'-phosphoadenylyl sulfate</name>
        <dbReference type="ChEBI" id="CHEBI:58339"/>
    </ligand>
</feature>
<feature type="binding site" evidence="1">
    <location>
        <position position="703"/>
    </location>
    <ligand>
        <name>3'-phosphoadenylyl sulfate</name>
        <dbReference type="ChEBI" id="CHEBI:58339"/>
    </ligand>
</feature>
<feature type="binding site" evidence="1">
    <location>
        <begin position="824"/>
        <end position="828"/>
    </location>
    <ligand>
        <name>3'-phosphoadenylyl sulfate</name>
        <dbReference type="ChEBI" id="CHEBI:58339"/>
    </ligand>
</feature>
<feature type="glycosylation site" description="N-linked (GlcNAc...) asparagine" evidence="2">
    <location>
        <position position="146"/>
    </location>
</feature>
<feature type="glycosylation site" description="N-linked (GlcNAc...) asparagine" evidence="2">
    <location>
        <position position="226"/>
    </location>
</feature>
<feature type="glycosylation site" description="N-linked (GlcNAc...) asparagine" evidence="2">
    <location>
        <position position="342"/>
    </location>
</feature>
<feature type="glycosylation site" description="N-linked (GlcNAc...) asparagine" evidence="2">
    <location>
        <position position="392"/>
    </location>
</feature>
<feature type="glycosylation site" description="N-linked (GlcNAc...) asparagine" evidence="2">
    <location>
        <position position="658"/>
    </location>
</feature>
<feature type="glycosylation site" description="N-linked (GlcNAc...) asparagine" evidence="2">
    <location>
        <position position="794"/>
    </location>
</feature>
<feature type="disulfide bond" evidence="1">
    <location>
        <begin position="809"/>
        <end position="819"/>
    </location>
</feature>
<feature type="splice variant" id="VSP_017407" description="In isoform 3." evidence="6">
    <location>
        <begin position="1"/>
        <end position="415"/>
    </location>
</feature>
<feature type="splice variant" id="VSP_017408" description="In isoform 2." evidence="5 6">
    <original>QFFNRNNY</original>
    <variation>HGFLPSPI</variation>
    <location>
        <begin position="635"/>
        <end position="642"/>
    </location>
</feature>
<feature type="splice variant" id="VSP_017409" description="In isoform 2." evidence="5 6">
    <location>
        <begin position="643"/>
        <end position="873"/>
    </location>
</feature>
<feature type="sequence conflict" description="In Ref. 1; AAG34793." evidence="7" ref="1">
    <original>M</original>
    <variation>T</variation>
    <location>
        <position position="97"/>
    </location>
</feature>
<feature type="sequence conflict" description="In Ref. 1; AAG34793." evidence="7" ref="1">
    <original>F</original>
    <variation>V</variation>
    <location>
        <position position="177"/>
    </location>
</feature>
<feature type="sequence conflict" description="In Ref. 1; AAG34793." evidence="7" ref="1">
    <original>D</original>
    <variation>E</variation>
    <location>
        <position position="373"/>
    </location>
</feature>
<feature type="sequence conflict" description="In Ref. 2; BAB29967." evidence="7" ref="2">
    <original>S</original>
    <variation>F</variation>
    <location>
        <position position="726"/>
    </location>
</feature>
<feature type="sequence conflict" description="In Ref. 2; BAB29967." evidence="7" ref="2">
    <original>H</original>
    <variation>Q</variation>
    <location>
        <position position="771"/>
    </location>
</feature>